<comment type="function">
    <text evidence="1">This endogenous retroviral envelope protein has retained its original fusogenic properties and participates in trophoblast fusion and the formation of a syncytium during placenta morphogenesis. The interaction with MFSD2A is apparently important for this process (By similarity).</text>
</comment>
<comment type="function">
    <text evidence="6">Endogenous envelope proteins may have kept, lost or modified their original function during evolution but this one can still make pseudotypes with MLV, HIV-1 or SIV-1 virions and confer infectivity. Retroviral envelope proteins mediate receptor recognition and membrane fusion during early infection. The surface protein mediates receptor recognition, while the transmembrane protein anchors the envelope heterodimer to the viral membrane through one transmembrane domain. The other hydrophobic domain, called fusion peptide, mediates fusion of the viral membrane with the target cell membrane (PubMed:14694139).</text>
</comment>
<comment type="subunit">
    <text evidence="1">The surface and transmembrane proteins form a heterodimer. They are attached by non-covalent interactions or by a labile interchain disulfide bond (By similarity).</text>
</comment>
<comment type="subcellular location">
    <subcellularLocation>
        <location evidence="7">Virion</location>
    </subcellularLocation>
</comment>
<comment type="subcellular location">
    <molecule>Surface protein</molecule>
    <subcellularLocation>
        <location evidence="7">Cell membrane</location>
        <topology evidence="7">Peripheral membrane protein</topology>
    </subcellularLocation>
    <text evidence="4">The surface protein is not anchored to the membrane, but localizes to the extracellular surface through its binding to TM.</text>
</comment>
<comment type="subcellular location">
    <molecule>Transmembrane protein</molecule>
    <subcellularLocation>
        <location evidence="7">Cell membrane</location>
        <topology evidence="5">Single-pass membrane protein</topology>
    </subcellularLocation>
</comment>
<comment type="domain">
    <text evidence="1">The CKS-17 immunosuppressive domain is present in many retroviral envelope proteins. As a synthetic peptide, it inhibits immune function in vitro and in vivo (By similarity).</text>
</comment>
<comment type="PTM">
    <text evidence="1">Specific enzymatic cleavages in vivo yield the mature SU and TM proteins.</text>
</comment>
<comment type="PTM">
    <text evidence="1">The CXXC motif is highly conserved across a broad range of retroviral envelope proteins. It is thought to participate in the formation of a labile disulfide bond possibly with the CX6CC motif present in the transmembrane protein (By similarity).</text>
</comment>
<comment type="miscellaneous">
    <text>This envelope is not fusogenic in a human cell system.</text>
</comment>
<comment type="miscellaneous">
    <text>Ortholog of the human HERV-FRD_6p24.1 envelope protein.</text>
</comment>
<comment type="miscellaneous">
    <text>The genome contains a high percentage of proviral-like elements, also called endogenous retroviruses (ERVs) that are the genomic traces of ancient infections of the germline by exogenous retroviruses. Although most of these elements are defective, some have conserved a functional envelope (env) gene, most probably diverted by the host for its benefit.</text>
</comment>
<comment type="similarity">
    <text evidence="7">Belongs to the gamma type-C retroviral envelope protein family. HERV class-I FRD env subfamily.</text>
</comment>
<comment type="caution">
    <text evidence="7">CKS-17 sequence does not match the minimal active consensus.</text>
</comment>
<sequence>MGLLLLLLILTPLLAAYCHPDFRLLEKAQQLLQSTGSPYSTNCWLCTSSSSKTPGRAYPASSREWTTIEAELHISYQWDPNLKGLIRLANSLLSKVKQDFPDIRKEPPIFGPIFTNVNLIGIAPICVTAKRKDGTNVGTLPSTVCNVTLTVDPNQQTYQKYAHNQFHHQPRFPKPPNITFPQGTLLDKSTRFCQGRPSSCSTRNFWFQPADYNQCLQIPNLSSTAEWVLLDQTRNSLFWENKTKGANQSQTPCVQVLAGMTIATSYLSTSAVSEFSGTSVTSLFSFHISTCLKTQGAFYICGQSIHQCLPTNWTGTCTIGYVSPDIFIAPGNLSLPIPIYGNFHFPRVKRAIHLIPLLVGLGIVGSAGTGIAGIAKASFTYSQLSKEIANNIEAMAKTLTTVQEQIDSLAAVVLQNRRGLDMLTAAQGGICLALDEKCCFWVNQSGKVQDNIRQLLNRASTLQEQATQGWLNWEGTWKWFSWVLPFTGPLVSLLLLLLFGPCLLNLITQFVSSRLQATKLQMKLNKRVHPRNSQESPF</sequence>
<evidence type="ECO:0000250" key="1"/>
<evidence type="ECO:0000250" key="2">
    <source>
        <dbReference type="UniProtKB" id="P23064"/>
    </source>
</evidence>
<evidence type="ECO:0000250" key="3">
    <source>
        <dbReference type="UniProtKB" id="P60508"/>
    </source>
</evidence>
<evidence type="ECO:0000250" key="4">
    <source>
        <dbReference type="UniProtKB" id="Q9UQF0"/>
    </source>
</evidence>
<evidence type="ECO:0000255" key="5"/>
<evidence type="ECO:0000269" key="6">
    <source>
    </source>
</evidence>
<evidence type="ECO:0000305" key="7"/>
<organism>
    <name type="scientific">Callithrix jacchus</name>
    <name type="common">White-tufted-ear marmoset</name>
    <dbReference type="NCBI Taxonomy" id="9483"/>
    <lineage>
        <taxon>Eukaryota</taxon>
        <taxon>Metazoa</taxon>
        <taxon>Chordata</taxon>
        <taxon>Craniata</taxon>
        <taxon>Vertebrata</taxon>
        <taxon>Euteleostomi</taxon>
        <taxon>Mammalia</taxon>
        <taxon>Eutheria</taxon>
        <taxon>Euarchontoglires</taxon>
        <taxon>Primates</taxon>
        <taxon>Haplorrhini</taxon>
        <taxon>Platyrrhini</taxon>
        <taxon>Cebidae</taxon>
        <taxon>Callitrichinae</taxon>
        <taxon>Callithrix</taxon>
        <taxon>Callithrix</taxon>
    </lineage>
</organism>
<keyword id="KW-1003">Cell membrane</keyword>
<keyword id="KW-0165">Cleavage on pair of basic residues</keyword>
<keyword id="KW-1015">Disulfide bond</keyword>
<keyword id="KW-0895">ERV</keyword>
<keyword id="KW-0325">Glycoprotein</keyword>
<keyword id="KW-0472">Membrane</keyword>
<keyword id="KW-1185">Reference proteome</keyword>
<keyword id="KW-0732">Signal</keyword>
<keyword id="KW-0812">Transmembrane</keyword>
<keyword id="KW-1133">Transmembrane helix</keyword>
<keyword id="KW-0814">Transposable element</keyword>
<keyword id="KW-0261">Viral envelope protein</keyword>
<keyword id="KW-0946">Virion</keyword>
<reference key="1">
    <citation type="journal article" date="2003" name="Proc. Natl. Acad. Sci. U.S.A.">
        <title>Genomewide screening for fusogenic human endogenous retrovirus envelopes identifies syncytin 2, a gene conserved on primate evolution.</title>
        <authorList>
            <person name="Blaise S."/>
            <person name="de Parseval N."/>
            <person name="Benit L."/>
            <person name="Heidmann T."/>
        </authorList>
    </citation>
    <scope>NUCLEOTIDE SEQUENCE [GENOMIC DNA]</scope>
</reference>
<reference key="2">
    <citation type="journal article" date="2004" name="J. Virol.">
        <title>Identification of an envelope protein from the FRD family of human endogenous retroviruses (HERV-FRD) conferring infectivity and functional conservation among simians.</title>
        <authorList>
            <person name="Blaise S."/>
            <person name="Ruggieri A."/>
            <person name="Dewannieux M."/>
            <person name="Cosset F.-L."/>
            <person name="Heidmann T."/>
        </authorList>
    </citation>
    <scope>FUNCTION</scope>
</reference>
<proteinExistence type="inferred from homology"/>
<name>SYCY2_CALJA</name>
<gene>
    <name type="primary">ERVFRD-1</name>
    <name type="synonym">ERVFRDE1</name>
</gene>
<feature type="signal peptide" evidence="5">
    <location>
        <begin position="1"/>
        <end position="15"/>
    </location>
</feature>
<feature type="chain" id="PRO_0000008442" description="Syncytin-2">
    <location>
        <begin position="16"/>
        <end position="538"/>
    </location>
</feature>
<feature type="chain" id="PRO_0000008443" description="Surface protein" evidence="1">
    <location>
        <begin position="16"/>
        <end position="350"/>
    </location>
</feature>
<feature type="chain" id="PRO_0000008444" description="Transmembrane protein" evidence="1">
    <location>
        <begin position="351"/>
        <end position="538"/>
    </location>
</feature>
<feature type="topological domain" description="Extracellular" evidence="5">
    <location>
        <begin position="16"/>
        <end position="478"/>
    </location>
</feature>
<feature type="transmembrane region" description="Helical" evidence="5">
    <location>
        <begin position="479"/>
        <end position="499"/>
    </location>
</feature>
<feature type="topological domain" description="Cytoplasmic" evidence="5">
    <location>
        <begin position="500"/>
        <end position="538"/>
    </location>
</feature>
<feature type="region of interest" description="Fusion peptide" evidence="5">
    <location>
        <begin position="354"/>
        <end position="374"/>
    </location>
</feature>
<feature type="short sequence motif" description="CXXC" evidence="7">
    <location>
        <begin position="43"/>
        <end position="46"/>
    </location>
</feature>
<feature type="short sequence motif" description="CKS-17" evidence="1">
    <location>
        <begin position="414"/>
        <end position="430"/>
    </location>
</feature>
<feature type="short sequence motif" description="CX6CC" evidence="7">
    <location>
        <begin position="431"/>
        <end position="439"/>
    </location>
</feature>
<feature type="site" description="Cleavage" evidence="4">
    <location>
        <begin position="350"/>
        <end position="351"/>
    </location>
</feature>
<feature type="glycosylation site" description="N-linked (GlcNAc...) asparagine" evidence="5">
    <location>
        <position position="146"/>
    </location>
</feature>
<feature type="glycosylation site" description="N-linked (GlcNAc...) asparagine" evidence="5">
    <location>
        <position position="177"/>
    </location>
</feature>
<feature type="glycosylation site" description="N-linked (GlcNAc...) asparagine" evidence="5">
    <location>
        <position position="220"/>
    </location>
</feature>
<feature type="glycosylation site" description="N-linked (GlcNAc...) asparagine" evidence="5">
    <location>
        <position position="241"/>
    </location>
</feature>
<feature type="glycosylation site" description="N-linked (GlcNAc...) asparagine" evidence="5">
    <location>
        <position position="247"/>
    </location>
</feature>
<feature type="glycosylation site" description="N-linked (GlcNAc...) asparagine" evidence="5">
    <location>
        <position position="312"/>
    </location>
</feature>
<feature type="glycosylation site" description="N-linked (GlcNAc...) asparagine" evidence="5">
    <location>
        <position position="332"/>
    </location>
</feature>
<feature type="glycosylation site" description="N-linked (GlcNAc...) asparagine" evidence="5">
    <location>
        <position position="443"/>
    </location>
</feature>
<feature type="disulfide bond" description="Interchain (between SU and TM chains, or C-46 with C-439); in linked form" evidence="4">
    <location>
        <begin position="43"/>
        <end position="439"/>
    </location>
</feature>
<feature type="disulfide bond" evidence="2">
    <location>
        <begin position="43"/>
        <end position="46"/>
    </location>
</feature>
<feature type="disulfide bond" evidence="3">
    <location>
        <begin position="431"/>
        <end position="438"/>
    </location>
</feature>
<dbReference type="EMBL" id="AJ577600">
    <property type="protein sequence ID" value="CAE12267.1"/>
    <property type="molecule type" value="Genomic_DNA"/>
</dbReference>
<dbReference type="SMR" id="P61553"/>
<dbReference type="FunCoup" id="P61553">
    <property type="interactions" value="3"/>
</dbReference>
<dbReference type="STRING" id="9483.ENSCJAP00000060020"/>
<dbReference type="GlyCosmos" id="P61553">
    <property type="glycosylation" value="8 sites, No reported glycans"/>
</dbReference>
<dbReference type="eggNOG" id="ENOG502SD08">
    <property type="taxonomic scope" value="Eukaryota"/>
</dbReference>
<dbReference type="InParanoid" id="P61553"/>
<dbReference type="Proteomes" id="UP000008225">
    <property type="component" value="Unplaced"/>
</dbReference>
<dbReference type="GO" id="GO:0005886">
    <property type="term" value="C:plasma membrane"/>
    <property type="evidence" value="ECO:0007669"/>
    <property type="project" value="UniProtKB-SubCell"/>
</dbReference>
<dbReference type="GO" id="GO:0006949">
    <property type="term" value="P:syncytium formation"/>
    <property type="evidence" value="ECO:0000250"/>
    <property type="project" value="UniProtKB"/>
</dbReference>
<dbReference type="GO" id="GO:0000768">
    <property type="term" value="P:syncytium formation by plasma membrane fusion"/>
    <property type="evidence" value="ECO:0000314"/>
    <property type="project" value="UniProtKB"/>
</dbReference>
<dbReference type="CDD" id="cd09851">
    <property type="entry name" value="HTLV-1-like_HR1-HR2"/>
    <property type="match status" value="1"/>
</dbReference>
<dbReference type="FunFam" id="1.10.287.210:FF:000002">
    <property type="entry name" value="Syncytin-2"/>
    <property type="match status" value="1"/>
</dbReference>
<dbReference type="Gene3D" id="1.10.287.210">
    <property type="match status" value="1"/>
</dbReference>
<dbReference type="InterPro" id="IPR018154">
    <property type="entry name" value="TLV/ENV_coat_polyprotein"/>
</dbReference>
<dbReference type="PANTHER" id="PTHR10424:SF85">
    <property type="entry name" value="SYNCYTIN-2"/>
    <property type="match status" value="1"/>
</dbReference>
<dbReference type="PANTHER" id="PTHR10424">
    <property type="entry name" value="VIRAL ENVELOPE PROTEIN"/>
    <property type="match status" value="1"/>
</dbReference>
<dbReference type="Pfam" id="PF00429">
    <property type="entry name" value="TLV_coat"/>
    <property type="match status" value="1"/>
</dbReference>
<dbReference type="SUPFAM" id="SSF58069">
    <property type="entry name" value="Virus ectodomain"/>
    <property type="match status" value="1"/>
</dbReference>
<protein>
    <recommendedName>
        <fullName>Syncytin-2</fullName>
    </recommendedName>
    <alternativeName>
        <fullName>ERV-FRD provirus ancestral Env polyprotein</fullName>
    </alternativeName>
    <alternativeName>
        <fullName>Envelope polyprotein</fullName>
    </alternativeName>
    <component>
        <recommendedName>
            <fullName>Surface protein</fullName>
            <shortName>SU</shortName>
        </recommendedName>
    </component>
    <component>
        <recommendedName>
            <fullName>Transmembrane protein</fullName>
            <shortName>TM</shortName>
        </recommendedName>
    </component>
</protein>
<accession>P61553</accession>